<proteinExistence type="predicted"/>
<protein>
    <recommendedName>
        <fullName>Uncharacterized protein MG028 homolog</fullName>
    </recommendedName>
</protein>
<name>Y031_MYCPN</name>
<sequence length="203" mass="23002">MRRNWREHYNVFVANLALVLGFMLNIVVARYTLTGATPQARFLFLTPFLGIVAASIFYFFDVKWFLADYPYKKFHFQKKWTWTYLSGVFVFFANILVNVILLALLVNQMTNQILSEKYTGLLDNAYPLLWSAVGVSIFLSLISIGLSKTAHFKIDVEMLKAKKGEPTAADKTDSRPVVVDLDQTKSKKDGDNPPQASGDMTSL</sequence>
<evidence type="ECO:0000255" key="1"/>
<evidence type="ECO:0000256" key="2">
    <source>
        <dbReference type="SAM" id="MobiDB-lite"/>
    </source>
</evidence>
<evidence type="ECO:0000305" key="3"/>
<comment type="subcellular location">
    <subcellularLocation>
        <location evidence="3">Cell membrane</location>
        <topology evidence="3">Multi-pass membrane protein</topology>
    </subcellularLocation>
</comment>
<feature type="chain" id="PRO_0000210392" description="Uncharacterized protein MG028 homolog">
    <location>
        <begin position="1"/>
        <end position="203"/>
    </location>
</feature>
<feature type="transmembrane region" description="Helical" evidence="1">
    <location>
        <begin position="9"/>
        <end position="29"/>
    </location>
</feature>
<feature type="transmembrane region" description="Helical" evidence="1">
    <location>
        <begin position="42"/>
        <end position="62"/>
    </location>
</feature>
<feature type="transmembrane region" description="Helical" evidence="1">
    <location>
        <begin position="86"/>
        <end position="106"/>
    </location>
</feature>
<feature type="transmembrane region" description="Helical" evidence="1">
    <location>
        <begin position="126"/>
        <end position="146"/>
    </location>
</feature>
<feature type="region of interest" description="Disordered" evidence="2">
    <location>
        <begin position="164"/>
        <end position="203"/>
    </location>
</feature>
<feature type="compositionally biased region" description="Basic and acidic residues" evidence="2">
    <location>
        <begin position="164"/>
        <end position="174"/>
    </location>
</feature>
<feature type="compositionally biased region" description="Basic and acidic residues" evidence="2">
    <location>
        <begin position="182"/>
        <end position="191"/>
    </location>
</feature>
<feature type="compositionally biased region" description="Polar residues" evidence="2">
    <location>
        <begin position="194"/>
        <end position="203"/>
    </location>
</feature>
<gene>
    <name type="ordered locus">MPN_031</name>
    <name type="ORF">B01_orf203</name>
    <name type="ORF">MP123</name>
</gene>
<accession>P75083</accession>
<keyword id="KW-1003">Cell membrane</keyword>
<keyword id="KW-0472">Membrane</keyword>
<keyword id="KW-1185">Reference proteome</keyword>
<keyword id="KW-0812">Transmembrane</keyword>
<keyword id="KW-1133">Transmembrane helix</keyword>
<reference key="1">
    <citation type="journal article" date="1996" name="Nucleic Acids Res.">
        <title>Complete sequence analysis of the genome of the bacterium Mycoplasma pneumoniae.</title>
        <authorList>
            <person name="Himmelreich R."/>
            <person name="Hilbert H."/>
            <person name="Plagens H."/>
            <person name="Pirkl E."/>
            <person name="Li B.-C."/>
            <person name="Herrmann R."/>
        </authorList>
    </citation>
    <scope>NUCLEOTIDE SEQUENCE [LARGE SCALE GENOMIC DNA]</scope>
    <source>
        <strain>ATCC 29342 / M129 / Subtype 1</strain>
    </source>
</reference>
<dbReference type="EMBL" id="U00089">
    <property type="protein sequence ID" value="AAB95771.1"/>
    <property type="molecule type" value="Genomic_DNA"/>
</dbReference>
<dbReference type="PIR" id="S73449">
    <property type="entry name" value="S73449"/>
</dbReference>
<dbReference type="RefSeq" id="NP_109719.1">
    <property type="nucleotide sequence ID" value="NC_000912.1"/>
</dbReference>
<dbReference type="RefSeq" id="WP_010874388.1">
    <property type="nucleotide sequence ID" value="NZ_OU342337.1"/>
</dbReference>
<dbReference type="STRING" id="272634.MPN_031"/>
<dbReference type="EnsemblBacteria" id="AAB95771">
    <property type="protein sequence ID" value="AAB95771"/>
    <property type="gene ID" value="MPN_031"/>
</dbReference>
<dbReference type="KEGG" id="mpn:MPN_031"/>
<dbReference type="PATRIC" id="fig|272634.6.peg.30"/>
<dbReference type="HOGENOM" id="CLU_1359142_0_0_14"/>
<dbReference type="OrthoDB" id="401159at2"/>
<dbReference type="BioCyc" id="MPNE272634:G1GJ3-45-MONOMER"/>
<dbReference type="Proteomes" id="UP000000808">
    <property type="component" value="Chromosome"/>
</dbReference>
<dbReference type="GO" id="GO:0005886">
    <property type="term" value="C:plasma membrane"/>
    <property type="evidence" value="ECO:0007669"/>
    <property type="project" value="UniProtKB-SubCell"/>
</dbReference>
<dbReference type="InterPro" id="IPR035217">
    <property type="entry name" value="DUF5453"/>
</dbReference>
<dbReference type="Pfam" id="PF17534">
    <property type="entry name" value="DUF5453"/>
    <property type="match status" value="1"/>
</dbReference>
<organism>
    <name type="scientific">Mycoplasma pneumoniae (strain ATCC 29342 / M129 / Subtype 1)</name>
    <name type="common">Mycoplasmoides pneumoniae</name>
    <dbReference type="NCBI Taxonomy" id="272634"/>
    <lineage>
        <taxon>Bacteria</taxon>
        <taxon>Bacillati</taxon>
        <taxon>Mycoplasmatota</taxon>
        <taxon>Mycoplasmoidales</taxon>
        <taxon>Mycoplasmoidaceae</taxon>
        <taxon>Mycoplasmoides</taxon>
    </lineage>
</organism>